<evidence type="ECO:0000255" key="1">
    <source>
        <dbReference type="HAMAP-Rule" id="MF_00182"/>
    </source>
</evidence>
<proteinExistence type="inferred from homology"/>
<reference key="1">
    <citation type="submission" date="2008-02" db="EMBL/GenBank/DDBJ databases">
        <title>Complete sequence of Shewanella woodyi ATCC 51908.</title>
        <authorList>
            <consortium name="US DOE Joint Genome Institute"/>
            <person name="Copeland A."/>
            <person name="Lucas S."/>
            <person name="Lapidus A."/>
            <person name="Glavina del Rio T."/>
            <person name="Dalin E."/>
            <person name="Tice H."/>
            <person name="Bruce D."/>
            <person name="Goodwin L."/>
            <person name="Pitluck S."/>
            <person name="Sims D."/>
            <person name="Brettin T."/>
            <person name="Detter J.C."/>
            <person name="Han C."/>
            <person name="Kuske C.R."/>
            <person name="Schmutz J."/>
            <person name="Larimer F."/>
            <person name="Land M."/>
            <person name="Hauser L."/>
            <person name="Kyrpides N."/>
            <person name="Lykidis A."/>
            <person name="Zhao J.-S."/>
            <person name="Richardson P."/>
        </authorList>
    </citation>
    <scope>NUCLEOTIDE SEQUENCE [LARGE SCALE GENOMIC DNA]</scope>
    <source>
        <strain>ATCC 51908 / MS32</strain>
    </source>
</reference>
<accession>B1KCW3</accession>
<sequence>MKPLNVIFAGTPDFAARHLQALINSEHNVIAVYSRADKPAGRGKKLQASPVKMLALENEIPVYQPTSLRDEQAQAELASLNADIMVVVAYGLILPKVVLDTPKLGCINVHGSILPRWRGAAPIQRALWSGDTETGVTIMQMDIGLDTGDMLLKTQLPIEDSDTSASLYEKLAEQGPEALVEALTGLAKGELAAEKQDEALANYAEKLSKEEAELDWNKSAAQLWREIRAFNPWPISHFSHQDASIKVREAHVSQSKSQAPAGTIISAGKEGIEIATGDGVLTLLNMQLPGKKPLSVADILNSRSEWFTPGTVLNSTKEAE</sequence>
<dbReference type="EC" id="2.1.2.9" evidence="1"/>
<dbReference type="EMBL" id="CP000961">
    <property type="protein sequence ID" value="ACA84338.1"/>
    <property type="molecule type" value="Genomic_DNA"/>
</dbReference>
<dbReference type="RefSeq" id="WP_012322687.1">
    <property type="nucleotide sequence ID" value="NC_010506.1"/>
</dbReference>
<dbReference type="SMR" id="B1KCW3"/>
<dbReference type="STRING" id="392500.Swoo_0037"/>
<dbReference type="KEGG" id="swd:Swoo_0037"/>
<dbReference type="eggNOG" id="COG0223">
    <property type="taxonomic scope" value="Bacteria"/>
</dbReference>
<dbReference type="HOGENOM" id="CLU_033347_1_2_6"/>
<dbReference type="Proteomes" id="UP000002168">
    <property type="component" value="Chromosome"/>
</dbReference>
<dbReference type="GO" id="GO:0005829">
    <property type="term" value="C:cytosol"/>
    <property type="evidence" value="ECO:0007669"/>
    <property type="project" value="TreeGrafter"/>
</dbReference>
<dbReference type="GO" id="GO:0004479">
    <property type="term" value="F:methionyl-tRNA formyltransferase activity"/>
    <property type="evidence" value="ECO:0007669"/>
    <property type="project" value="UniProtKB-UniRule"/>
</dbReference>
<dbReference type="CDD" id="cd08646">
    <property type="entry name" value="FMT_core_Met-tRNA-FMT_N"/>
    <property type="match status" value="1"/>
</dbReference>
<dbReference type="CDD" id="cd08704">
    <property type="entry name" value="Met_tRNA_FMT_C"/>
    <property type="match status" value="1"/>
</dbReference>
<dbReference type="FunFam" id="3.40.50.170:FF:000003">
    <property type="entry name" value="Methionyl-tRNA formyltransferase"/>
    <property type="match status" value="1"/>
</dbReference>
<dbReference type="Gene3D" id="3.10.25.10">
    <property type="entry name" value="Formyl transferase, C-terminal domain"/>
    <property type="match status" value="1"/>
</dbReference>
<dbReference type="Gene3D" id="3.40.50.170">
    <property type="entry name" value="Formyl transferase, N-terminal domain"/>
    <property type="match status" value="1"/>
</dbReference>
<dbReference type="HAMAP" id="MF_00182">
    <property type="entry name" value="Formyl_trans"/>
    <property type="match status" value="1"/>
</dbReference>
<dbReference type="InterPro" id="IPR005794">
    <property type="entry name" value="Fmt"/>
</dbReference>
<dbReference type="InterPro" id="IPR005793">
    <property type="entry name" value="Formyl_trans_C"/>
</dbReference>
<dbReference type="InterPro" id="IPR037022">
    <property type="entry name" value="Formyl_trans_C_sf"/>
</dbReference>
<dbReference type="InterPro" id="IPR002376">
    <property type="entry name" value="Formyl_transf_N"/>
</dbReference>
<dbReference type="InterPro" id="IPR036477">
    <property type="entry name" value="Formyl_transf_N_sf"/>
</dbReference>
<dbReference type="InterPro" id="IPR011034">
    <property type="entry name" value="Formyl_transferase-like_C_sf"/>
</dbReference>
<dbReference type="InterPro" id="IPR001555">
    <property type="entry name" value="GART_AS"/>
</dbReference>
<dbReference type="InterPro" id="IPR044135">
    <property type="entry name" value="Met-tRNA-FMT_C"/>
</dbReference>
<dbReference type="InterPro" id="IPR041711">
    <property type="entry name" value="Met-tRNA-FMT_N"/>
</dbReference>
<dbReference type="NCBIfam" id="TIGR00460">
    <property type="entry name" value="fmt"/>
    <property type="match status" value="1"/>
</dbReference>
<dbReference type="PANTHER" id="PTHR11138">
    <property type="entry name" value="METHIONYL-TRNA FORMYLTRANSFERASE"/>
    <property type="match status" value="1"/>
</dbReference>
<dbReference type="PANTHER" id="PTHR11138:SF5">
    <property type="entry name" value="METHIONYL-TRNA FORMYLTRANSFERASE, MITOCHONDRIAL"/>
    <property type="match status" value="1"/>
</dbReference>
<dbReference type="Pfam" id="PF02911">
    <property type="entry name" value="Formyl_trans_C"/>
    <property type="match status" value="1"/>
</dbReference>
<dbReference type="Pfam" id="PF00551">
    <property type="entry name" value="Formyl_trans_N"/>
    <property type="match status" value="1"/>
</dbReference>
<dbReference type="SUPFAM" id="SSF50486">
    <property type="entry name" value="FMT C-terminal domain-like"/>
    <property type="match status" value="1"/>
</dbReference>
<dbReference type="SUPFAM" id="SSF53328">
    <property type="entry name" value="Formyltransferase"/>
    <property type="match status" value="1"/>
</dbReference>
<dbReference type="PROSITE" id="PS00373">
    <property type="entry name" value="GART"/>
    <property type="match status" value="1"/>
</dbReference>
<protein>
    <recommendedName>
        <fullName evidence="1">Methionyl-tRNA formyltransferase</fullName>
        <ecNumber evidence="1">2.1.2.9</ecNumber>
    </recommendedName>
</protein>
<comment type="function">
    <text evidence="1">Attaches a formyl group to the free amino group of methionyl-tRNA(fMet). The formyl group appears to play a dual role in the initiator identity of N-formylmethionyl-tRNA by promoting its recognition by IF2 and preventing the misappropriation of this tRNA by the elongation apparatus.</text>
</comment>
<comment type="catalytic activity">
    <reaction evidence="1">
        <text>L-methionyl-tRNA(fMet) + (6R)-10-formyltetrahydrofolate = N-formyl-L-methionyl-tRNA(fMet) + (6S)-5,6,7,8-tetrahydrofolate + H(+)</text>
        <dbReference type="Rhea" id="RHEA:24380"/>
        <dbReference type="Rhea" id="RHEA-COMP:9952"/>
        <dbReference type="Rhea" id="RHEA-COMP:9953"/>
        <dbReference type="ChEBI" id="CHEBI:15378"/>
        <dbReference type="ChEBI" id="CHEBI:57453"/>
        <dbReference type="ChEBI" id="CHEBI:78530"/>
        <dbReference type="ChEBI" id="CHEBI:78844"/>
        <dbReference type="ChEBI" id="CHEBI:195366"/>
        <dbReference type="EC" id="2.1.2.9"/>
    </reaction>
</comment>
<comment type="similarity">
    <text evidence="1">Belongs to the Fmt family.</text>
</comment>
<name>FMT_SHEWM</name>
<keyword id="KW-0648">Protein biosynthesis</keyword>
<keyword id="KW-1185">Reference proteome</keyword>
<keyword id="KW-0808">Transferase</keyword>
<organism>
    <name type="scientific">Shewanella woodyi (strain ATCC 51908 / MS32)</name>
    <dbReference type="NCBI Taxonomy" id="392500"/>
    <lineage>
        <taxon>Bacteria</taxon>
        <taxon>Pseudomonadati</taxon>
        <taxon>Pseudomonadota</taxon>
        <taxon>Gammaproteobacteria</taxon>
        <taxon>Alteromonadales</taxon>
        <taxon>Shewanellaceae</taxon>
        <taxon>Shewanella</taxon>
    </lineage>
</organism>
<feature type="chain" id="PRO_1000098443" description="Methionyl-tRNA formyltransferase">
    <location>
        <begin position="1"/>
        <end position="320"/>
    </location>
</feature>
<feature type="binding site" evidence="1">
    <location>
        <begin position="112"/>
        <end position="115"/>
    </location>
    <ligand>
        <name>(6S)-5,6,7,8-tetrahydrofolate</name>
        <dbReference type="ChEBI" id="CHEBI:57453"/>
    </ligand>
</feature>
<gene>
    <name evidence="1" type="primary">fmt</name>
    <name type="ordered locus">Swoo_0037</name>
</gene>